<organism>
    <name type="scientific">Acidovorax sp. (strain JS42)</name>
    <dbReference type="NCBI Taxonomy" id="232721"/>
    <lineage>
        <taxon>Bacteria</taxon>
        <taxon>Pseudomonadati</taxon>
        <taxon>Pseudomonadota</taxon>
        <taxon>Betaproteobacteria</taxon>
        <taxon>Burkholderiales</taxon>
        <taxon>Comamonadaceae</taxon>
        <taxon>Acidovorax</taxon>
    </lineage>
</organism>
<proteinExistence type="inferred from homology"/>
<feature type="chain" id="PRO_0000320710" description="Protein translocase subunit SecA">
    <location>
        <begin position="1"/>
        <end position="917"/>
    </location>
</feature>
<feature type="binding site" evidence="1">
    <location>
        <position position="87"/>
    </location>
    <ligand>
        <name>ATP</name>
        <dbReference type="ChEBI" id="CHEBI:30616"/>
    </ligand>
</feature>
<feature type="binding site" evidence="1">
    <location>
        <begin position="105"/>
        <end position="109"/>
    </location>
    <ligand>
        <name>ATP</name>
        <dbReference type="ChEBI" id="CHEBI:30616"/>
    </ligand>
</feature>
<feature type="binding site" evidence="1">
    <location>
        <position position="516"/>
    </location>
    <ligand>
        <name>ATP</name>
        <dbReference type="ChEBI" id="CHEBI:30616"/>
    </ligand>
</feature>
<feature type="binding site" evidence="1">
    <location>
        <position position="901"/>
    </location>
    <ligand>
        <name>Zn(2+)</name>
        <dbReference type="ChEBI" id="CHEBI:29105"/>
    </ligand>
</feature>
<feature type="binding site" evidence="1">
    <location>
        <position position="903"/>
    </location>
    <ligand>
        <name>Zn(2+)</name>
        <dbReference type="ChEBI" id="CHEBI:29105"/>
    </ligand>
</feature>
<feature type="binding site" evidence="1">
    <location>
        <position position="912"/>
    </location>
    <ligand>
        <name>Zn(2+)</name>
        <dbReference type="ChEBI" id="CHEBI:29105"/>
    </ligand>
</feature>
<feature type="binding site" evidence="1">
    <location>
        <position position="913"/>
    </location>
    <ligand>
        <name>Zn(2+)</name>
        <dbReference type="ChEBI" id="CHEBI:29105"/>
    </ligand>
</feature>
<reference key="1">
    <citation type="submission" date="2006-12" db="EMBL/GenBank/DDBJ databases">
        <title>Complete sequence of chromosome 1 of Acidovorax sp. JS42.</title>
        <authorList>
            <person name="Copeland A."/>
            <person name="Lucas S."/>
            <person name="Lapidus A."/>
            <person name="Barry K."/>
            <person name="Detter J.C."/>
            <person name="Glavina del Rio T."/>
            <person name="Dalin E."/>
            <person name="Tice H."/>
            <person name="Pitluck S."/>
            <person name="Chertkov O."/>
            <person name="Brettin T."/>
            <person name="Bruce D."/>
            <person name="Han C."/>
            <person name="Tapia R."/>
            <person name="Gilna P."/>
            <person name="Schmutz J."/>
            <person name="Larimer F."/>
            <person name="Land M."/>
            <person name="Hauser L."/>
            <person name="Kyrpides N."/>
            <person name="Kim E."/>
            <person name="Stahl D."/>
            <person name="Richardson P."/>
        </authorList>
    </citation>
    <scope>NUCLEOTIDE SEQUENCE [LARGE SCALE GENOMIC DNA]</scope>
    <source>
        <strain>JS42</strain>
    </source>
</reference>
<sequence>MATNFLTKIFGSRNDRLLKQYRKTVARINAMEPDYEKLSDEALRGKTQEFKDRIAQGESLDALLPEAFAVVREGSKRIMKMRHFDVQLVGGMALHYGKIAEMRTGEGKTLTATLPVYLNALSGQGVHVVTVNDYLAGRDAQWMGRLYNFLGLTVGINLPQMPREEKQAAYQADITYGTNNEYGFDYLRDNMVYDARERVQRGLNYAIVDEVDSILIDEARTPLIISGQAEDHTALYVAMNKVVPLLVRQEGEADPRTGEGVTKPGDFTLDEKTHQVFLTEQGHENAERILASQGLIPEGASLYDPANITLVHHLYAALRANHLYHRDQHYVVQNGEIVIVDEFTGRLMAGRRWSEGLHQAVEAKEGVNIQAENQTLASITFQNYFRLYNKLSGMTGTADTEAYEFQEIYGLETVVIPPNRPSKRDDQLDRVYKTTREKYEAAIADIRECHERGQPVLVGTTSIENSEIIAELLNKAGLPHQVLNAKQHAREADIVAQAGRPGMITIATNMAGRGTDIVLGGNVEKAIAALEADESLSEADRAARVQELRAQWKLDHEKVTALGGLRIIATERHESRRIDNQLRGRSGRQGDPGSSRFYLSLDDQLMRIFAGDRVKAIMDRLKMPDGEAIEAGIVTRSIESAQRKVEARNFDIRKQLLEYDDVANDQRKVIYQQRNEILDAPDLGVLIDAMRDDCLADVVRQYVPAESVEEQWDLAGLEKALASDWQVSLALQKEVEGSDAITDEEILEKVQQAAREAFQAKVGQVGAENFTQFERMVLLQNFDTNWRDHLSALDYLRQGIHLRGYAQKQPKQEYKREAFELFRQLIDQVKNEVTRLMMTVQVQSSAQLDEATQAMEDRGEGISNVTYSSPTETGEVETVADAATAAQPAAAGVRVGRNDPCPCGSGKKYKQCHGKLA</sequence>
<name>SECA_ACISJ</name>
<comment type="function">
    <text evidence="1">Part of the Sec protein translocase complex. Interacts with the SecYEG preprotein conducting channel. Has a central role in coupling the hydrolysis of ATP to the transfer of proteins into and across the cell membrane, serving both as a receptor for the preprotein-SecB complex and as an ATP-driven molecular motor driving the stepwise translocation of polypeptide chains across the membrane.</text>
</comment>
<comment type="catalytic activity">
    <reaction evidence="1">
        <text>ATP + H2O + cellular proteinSide 1 = ADP + phosphate + cellular proteinSide 2.</text>
        <dbReference type="EC" id="7.4.2.8"/>
    </reaction>
</comment>
<comment type="cofactor">
    <cofactor evidence="1">
        <name>Zn(2+)</name>
        <dbReference type="ChEBI" id="CHEBI:29105"/>
    </cofactor>
    <text evidence="1">May bind 1 zinc ion per subunit.</text>
</comment>
<comment type="subunit">
    <text evidence="1">Monomer and homodimer. Part of the essential Sec protein translocation apparatus which comprises SecA, SecYEG and auxiliary proteins SecDF-YajC and YidC.</text>
</comment>
<comment type="subcellular location">
    <subcellularLocation>
        <location evidence="1">Cell inner membrane</location>
        <topology evidence="1">Peripheral membrane protein</topology>
        <orientation evidence="1">Cytoplasmic side</orientation>
    </subcellularLocation>
    <subcellularLocation>
        <location evidence="1">Cytoplasm</location>
    </subcellularLocation>
    <text evidence="1">Distribution is 50-50.</text>
</comment>
<comment type="similarity">
    <text evidence="1">Belongs to the SecA family.</text>
</comment>
<protein>
    <recommendedName>
        <fullName evidence="1">Protein translocase subunit SecA</fullName>
        <ecNumber evidence="1">7.4.2.8</ecNumber>
    </recommendedName>
</protein>
<accession>A1W465</accession>
<keyword id="KW-0067">ATP-binding</keyword>
<keyword id="KW-0997">Cell inner membrane</keyword>
<keyword id="KW-1003">Cell membrane</keyword>
<keyword id="KW-0963">Cytoplasm</keyword>
<keyword id="KW-0472">Membrane</keyword>
<keyword id="KW-0479">Metal-binding</keyword>
<keyword id="KW-0547">Nucleotide-binding</keyword>
<keyword id="KW-0653">Protein transport</keyword>
<keyword id="KW-1278">Translocase</keyword>
<keyword id="KW-0811">Translocation</keyword>
<keyword id="KW-0813">Transport</keyword>
<keyword id="KW-0862">Zinc</keyword>
<dbReference type="EC" id="7.4.2.8" evidence="1"/>
<dbReference type="EMBL" id="CP000539">
    <property type="protein sequence ID" value="ABM41040.1"/>
    <property type="molecule type" value="Genomic_DNA"/>
</dbReference>
<dbReference type="SMR" id="A1W465"/>
<dbReference type="STRING" id="232721.Ajs_0796"/>
<dbReference type="KEGG" id="ajs:Ajs_0796"/>
<dbReference type="eggNOG" id="COG0653">
    <property type="taxonomic scope" value="Bacteria"/>
</dbReference>
<dbReference type="HOGENOM" id="CLU_005314_3_0_4"/>
<dbReference type="Proteomes" id="UP000000645">
    <property type="component" value="Chromosome"/>
</dbReference>
<dbReference type="GO" id="GO:0031522">
    <property type="term" value="C:cell envelope Sec protein transport complex"/>
    <property type="evidence" value="ECO:0007669"/>
    <property type="project" value="TreeGrafter"/>
</dbReference>
<dbReference type="GO" id="GO:0005829">
    <property type="term" value="C:cytosol"/>
    <property type="evidence" value="ECO:0007669"/>
    <property type="project" value="TreeGrafter"/>
</dbReference>
<dbReference type="GO" id="GO:0005886">
    <property type="term" value="C:plasma membrane"/>
    <property type="evidence" value="ECO:0007669"/>
    <property type="project" value="UniProtKB-SubCell"/>
</dbReference>
<dbReference type="GO" id="GO:0005524">
    <property type="term" value="F:ATP binding"/>
    <property type="evidence" value="ECO:0007669"/>
    <property type="project" value="UniProtKB-UniRule"/>
</dbReference>
<dbReference type="GO" id="GO:0046872">
    <property type="term" value="F:metal ion binding"/>
    <property type="evidence" value="ECO:0007669"/>
    <property type="project" value="UniProtKB-KW"/>
</dbReference>
<dbReference type="GO" id="GO:0008564">
    <property type="term" value="F:protein-exporting ATPase activity"/>
    <property type="evidence" value="ECO:0007669"/>
    <property type="project" value="UniProtKB-EC"/>
</dbReference>
<dbReference type="GO" id="GO:0065002">
    <property type="term" value="P:intracellular protein transmembrane transport"/>
    <property type="evidence" value="ECO:0007669"/>
    <property type="project" value="UniProtKB-UniRule"/>
</dbReference>
<dbReference type="GO" id="GO:0017038">
    <property type="term" value="P:protein import"/>
    <property type="evidence" value="ECO:0007669"/>
    <property type="project" value="InterPro"/>
</dbReference>
<dbReference type="GO" id="GO:0006605">
    <property type="term" value="P:protein targeting"/>
    <property type="evidence" value="ECO:0007669"/>
    <property type="project" value="UniProtKB-UniRule"/>
</dbReference>
<dbReference type="GO" id="GO:0043952">
    <property type="term" value="P:protein transport by the Sec complex"/>
    <property type="evidence" value="ECO:0007669"/>
    <property type="project" value="TreeGrafter"/>
</dbReference>
<dbReference type="CDD" id="cd17928">
    <property type="entry name" value="DEXDc_SecA"/>
    <property type="match status" value="1"/>
</dbReference>
<dbReference type="CDD" id="cd18803">
    <property type="entry name" value="SF2_C_secA"/>
    <property type="match status" value="1"/>
</dbReference>
<dbReference type="FunFam" id="3.40.50.300:FF:000081">
    <property type="entry name" value="Preprotein translocase subunit SecA"/>
    <property type="match status" value="1"/>
</dbReference>
<dbReference type="FunFam" id="3.40.50.300:FF:000113">
    <property type="entry name" value="Preprotein translocase subunit SecA"/>
    <property type="match status" value="1"/>
</dbReference>
<dbReference type="FunFam" id="3.90.1440.10:FF:000001">
    <property type="entry name" value="Preprotein translocase subunit SecA"/>
    <property type="match status" value="1"/>
</dbReference>
<dbReference type="FunFam" id="1.10.3060.10:FF:000003">
    <property type="entry name" value="Protein translocase subunit SecA"/>
    <property type="match status" value="1"/>
</dbReference>
<dbReference type="Gene3D" id="1.10.3060.10">
    <property type="entry name" value="Helical scaffold and wing domains of SecA"/>
    <property type="match status" value="1"/>
</dbReference>
<dbReference type="Gene3D" id="3.40.50.300">
    <property type="entry name" value="P-loop containing nucleotide triphosphate hydrolases"/>
    <property type="match status" value="2"/>
</dbReference>
<dbReference type="Gene3D" id="3.90.1440.10">
    <property type="entry name" value="SecA, preprotein cross-linking domain"/>
    <property type="match status" value="1"/>
</dbReference>
<dbReference type="HAMAP" id="MF_01382">
    <property type="entry name" value="SecA"/>
    <property type="match status" value="1"/>
</dbReference>
<dbReference type="InterPro" id="IPR014001">
    <property type="entry name" value="Helicase_ATP-bd"/>
</dbReference>
<dbReference type="InterPro" id="IPR001650">
    <property type="entry name" value="Helicase_C-like"/>
</dbReference>
<dbReference type="InterPro" id="IPR027417">
    <property type="entry name" value="P-loop_NTPase"/>
</dbReference>
<dbReference type="InterPro" id="IPR004027">
    <property type="entry name" value="SEC_C_motif"/>
</dbReference>
<dbReference type="InterPro" id="IPR000185">
    <property type="entry name" value="SecA"/>
</dbReference>
<dbReference type="InterPro" id="IPR020937">
    <property type="entry name" value="SecA_CS"/>
</dbReference>
<dbReference type="InterPro" id="IPR011115">
    <property type="entry name" value="SecA_DEAD"/>
</dbReference>
<dbReference type="InterPro" id="IPR014018">
    <property type="entry name" value="SecA_motor_DEAD"/>
</dbReference>
<dbReference type="InterPro" id="IPR011130">
    <property type="entry name" value="SecA_preprotein_X-link_dom"/>
</dbReference>
<dbReference type="InterPro" id="IPR044722">
    <property type="entry name" value="SecA_SF2_C"/>
</dbReference>
<dbReference type="InterPro" id="IPR011116">
    <property type="entry name" value="SecA_Wing/Scaffold"/>
</dbReference>
<dbReference type="InterPro" id="IPR036266">
    <property type="entry name" value="SecA_Wing/Scaffold_sf"/>
</dbReference>
<dbReference type="InterPro" id="IPR036670">
    <property type="entry name" value="SecA_X-link_sf"/>
</dbReference>
<dbReference type="NCBIfam" id="NF009538">
    <property type="entry name" value="PRK12904.1"/>
    <property type="match status" value="1"/>
</dbReference>
<dbReference type="NCBIfam" id="TIGR00963">
    <property type="entry name" value="secA"/>
    <property type="match status" value="1"/>
</dbReference>
<dbReference type="PANTHER" id="PTHR30612:SF0">
    <property type="entry name" value="CHLOROPLAST PROTEIN-TRANSPORTING ATPASE"/>
    <property type="match status" value="1"/>
</dbReference>
<dbReference type="PANTHER" id="PTHR30612">
    <property type="entry name" value="SECA INNER MEMBRANE COMPONENT OF SEC PROTEIN SECRETION SYSTEM"/>
    <property type="match status" value="1"/>
</dbReference>
<dbReference type="Pfam" id="PF21090">
    <property type="entry name" value="P-loop_SecA"/>
    <property type="match status" value="1"/>
</dbReference>
<dbReference type="Pfam" id="PF02810">
    <property type="entry name" value="SEC-C"/>
    <property type="match status" value="1"/>
</dbReference>
<dbReference type="Pfam" id="PF07517">
    <property type="entry name" value="SecA_DEAD"/>
    <property type="match status" value="1"/>
</dbReference>
<dbReference type="Pfam" id="PF01043">
    <property type="entry name" value="SecA_PP_bind"/>
    <property type="match status" value="1"/>
</dbReference>
<dbReference type="Pfam" id="PF07516">
    <property type="entry name" value="SecA_SW"/>
    <property type="match status" value="1"/>
</dbReference>
<dbReference type="PRINTS" id="PR00906">
    <property type="entry name" value="SECA"/>
</dbReference>
<dbReference type="SMART" id="SM00957">
    <property type="entry name" value="SecA_DEAD"/>
    <property type="match status" value="1"/>
</dbReference>
<dbReference type="SMART" id="SM00958">
    <property type="entry name" value="SecA_PP_bind"/>
    <property type="match status" value="1"/>
</dbReference>
<dbReference type="SUPFAM" id="SSF81886">
    <property type="entry name" value="Helical scaffold and wing domains of SecA"/>
    <property type="match status" value="1"/>
</dbReference>
<dbReference type="SUPFAM" id="SSF52540">
    <property type="entry name" value="P-loop containing nucleoside triphosphate hydrolases"/>
    <property type="match status" value="2"/>
</dbReference>
<dbReference type="SUPFAM" id="SSF81767">
    <property type="entry name" value="Pre-protein crosslinking domain of SecA"/>
    <property type="match status" value="1"/>
</dbReference>
<dbReference type="PROSITE" id="PS01312">
    <property type="entry name" value="SECA"/>
    <property type="match status" value="1"/>
</dbReference>
<dbReference type="PROSITE" id="PS51196">
    <property type="entry name" value="SECA_MOTOR_DEAD"/>
    <property type="match status" value="1"/>
</dbReference>
<evidence type="ECO:0000255" key="1">
    <source>
        <dbReference type="HAMAP-Rule" id="MF_01382"/>
    </source>
</evidence>
<gene>
    <name evidence="1" type="primary">secA</name>
    <name type="ordered locus">Ajs_0796</name>
</gene>